<reference key="1">
    <citation type="submission" date="2007-11" db="EMBL/GenBank/DDBJ databases">
        <authorList>
            <consortium name="The Salmonella enterica serovar Arizonae Genome Sequencing Project"/>
            <person name="McClelland M."/>
            <person name="Sanderson E.K."/>
            <person name="Porwollik S."/>
            <person name="Spieth J."/>
            <person name="Clifton W.S."/>
            <person name="Fulton R."/>
            <person name="Chunyan W."/>
            <person name="Wollam A."/>
            <person name="Shah N."/>
            <person name="Pepin K."/>
            <person name="Bhonagiri V."/>
            <person name="Nash W."/>
            <person name="Johnson M."/>
            <person name="Thiruvilangam P."/>
            <person name="Wilson R."/>
        </authorList>
    </citation>
    <scope>NUCLEOTIDE SEQUENCE [LARGE SCALE GENOMIC DNA]</scope>
    <source>
        <strain>ATCC BAA-731 / CDC346-86 / RSK2980</strain>
    </source>
</reference>
<evidence type="ECO:0000255" key="1">
    <source>
        <dbReference type="HAMAP-Rule" id="MF_00384"/>
    </source>
</evidence>
<gene>
    <name evidence="1" type="primary">thrB</name>
    <name type="ordered locus">SARI_02989</name>
</gene>
<feature type="chain" id="PRO_1000080127" description="Homoserine kinase">
    <location>
        <begin position="1"/>
        <end position="309"/>
    </location>
</feature>
<feature type="binding site" evidence="1">
    <location>
        <begin position="91"/>
        <end position="101"/>
    </location>
    <ligand>
        <name>ATP</name>
        <dbReference type="ChEBI" id="CHEBI:30616"/>
    </ligand>
</feature>
<accession>A9MR86</accession>
<organism>
    <name type="scientific">Salmonella arizonae (strain ATCC BAA-731 / CDC346-86 / RSK2980)</name>
    <dbReference type="NCBI Taxonomy" id="41514"/>
    <lineage>
        <taxon>Bacteria</taxon>
        <taxon>Pseudomonadati</taxon>
        <taxon>Pseudomonadota</taxon>
        <taxon>Gammaproteobacteria</taxon>
        <taxon>Enterobacterales</taxon>
        <taxon>Enterobacteriaceae</taxon>
        <taxon>Salmonella</taxon>
    </lineage>
</organism>
<keyword id="KW-0028">Amino-acid biosynthesis</keyword>
<keyword id="KW-0067">ATP-binding</keyword>
<keyword id="KW-0963">Cytoplasm</keyword>
<keyword id="KW-0418">Kinase</keyword>
<keyword id="KW-0547">Nucleotide-binding</keyword>
<keyword id="KW-1185">Reference proteome</keyword>
<keyword id="KW-0791">Threonine biosynthesis</keyword>
<keyword id="KW-0808">Transferase</keyword>
<proteinExistence type="inferred from homology"/>
<dbReference type="EC" id="2.7.1.39" evidence="1"/>
<dbReference type="EMBL" id="CP000880">
    <property type="protein sequence ID" value="ABX22834.1"/>
    <property type="molecule type" value="Genomic_DNA"/>
</dbReference>
<dbReference type="SMR" id="A9MR86"/>
<dbReference type="STRING" id="41514.SARI_02989"/>
<dbReference type="KEGG" id="ses:SARI_02989"/>
<dbReference type="HOGENOM" id="CLU_041243_1_1_6"/>
<dbReference type="UniPathway" id="UPA00050">
    <property type="reaction ID" value="UER00064"/>
</dbReference>
<dbReference type="Proteomes" id="UP000002084">
    <property type="component" value="Chromosome"/>
</dbReference>
<dbReference type="GO" id="GO:0005737">
    <property type="term" value="C:cytoplasm"/>
    <property type="evidence" value="ECO:0007669"/>
    <property type="project" value="UniProtKB-SubCell"/>
</dbReference>
<dbReference type="GO" id="GO:0005524">
    <property type="term" value="F:ATP binding"/>
    <property type="evidence" value="ECO:0007669"/>
    <property type="project" value="UniProtKB-UniRule"/>
</dbReference>
<dbReference type="GO" id="GO:0004413">
    <property type="term" value="F:homoserine kinase activity"/>
    <property type="evidence" value="ECO:0007669"/>
    <property type="project" value="UniProtKB-UniRule"/>
</dbReference>
<dbReference type="GO" id="GO:0009088">
    <property type="term" value="P:threonine biosynthetic process"/>
    <property type="evidence" value="ECO:0007669"/>
    <property type="project" value="UniProtKB-UniRule"/>
</dbReference>
<dbReference type="FunFam" id="3.30.230.10:FF:000020">
    <property type="entry name" value="Homoserine kinase"/>
    <property type="match status" value="1"/>
</dbReference>
<dbReference type="FunFam" id="3.30.70.890:FF:000002">
    <property type="entry name" value="Homoserine kinase"/>
    <property type="match status" value="1"/>
</dbReference>
<dbReference type="Gene3D" id="3.30.230.10">
    <property type="match status" value="1"/>
</dbReference>
<dbReference type="Gene3D" id="3.30.70.890">
    <property type="entry name" value="GHMP kinase, C-terminal domain"/>
    <property type="match status" value="1"/>
</dbReference>
<dbReference type="HAMAP" id="MF_00384">
    <property type="entry name" value="Homoser_kinase"/>
    <property type="match status" value="1"/>
</dbReference>
<dbReference type="InterPro" id="IPR013750">
    <property type="entry name" value="GHMP_kinase_C_dom"/>
</dbReference>
<dbReference type="InterPro" id="IPR036554">
    <property type="entry name" value="GHMP_kinase_C_sf"/>
</dbReference>
<dbReference type="InterPro" id="IPR006204">
    <property type="entry name" value="GHMP_kinase_N_dom"/>
</dbReference>
<dbReference type="InterPro" id="IPR006203">
    <property type="entry name" value="GHMP_knse_ATP-bd_CS"/>
</dbReference>
<dbReference type="InterPro" id="IPR000870">
    <property type="entry name" value="Homoserine_kinase"/>
</dbReference>
<dbReference type="InterPro" id="IPR020568">
    <property type="entry name" value="Ribosomal_Su5_D2-typ_SF"/>
</dbReference>
<dbReference type="InterPro" id="IPR014721">
    <property type="entry name" value="Ribsml_uS5_D2-typ_fold_subgr"/>
</dbReference>
<dbReference type="NCBIfam" id="NF002288">
    <property type="entry name" value="PRK01212.1-4"/>
    <property type="match status" value="1"/>
</dbReference>
<dbReference type="NCBIfam" id="TIGR00191">
    <property type="entry name" value="thrB"/>
    <property type="match status" value="1"/>
</dbReference>
<dbReference type="PANTHER" id="PTHR20861:SF1">
    <property type="entry name" value="HOMOSERINE KINASE"/>
    <property type="match status" value="1"/>
</dbReference>
<dbReference type="PANTHER" id="PTHR20861">
    <property type="entry name" value="HOMOSERINE/4-DIPHOSPHOCYTIDYL-2-C-METHYL-D-ERYTHRITOL KINASE"/>
    <property type="match status" value="1"/>
</dbReference>
<dbReference type="Pfam" id="PF08544">
    <property type="entry name" value="GHMP_kinases_C"/>
    <property type="match status" value="1"/>
</dbReference>
<dbReference type="Pfam" id="PF00288">
    <property type="entry name" value="GHMP_kinases_N"/>
    <property type="match status" value="1"/>
</dbReference>
<dbReference type="PIRSF" id="PIRSF000676">
    <property type="entry name" value="Homoser_kin"/>
    <property type="match status" value="1"/>
</dbReference>
<dbReference type="PRINTS" id="PR00958">
    <property type="entry name" value="HOMSERKINASE"/>
</dbReference>
<dbReference type="SUPFAM" id="SSF55060">
    <property type="entry name" value="GHMP Kinase, C-terminal domain"/>
    <property type="match status" value="1"/>
</dbReference>
<dbReference type="SUPFAM" id="SSF54211">
    <property type="entry name" value="Ribosomal protein S5 domain 2-like"/>
    <property type="match status" value="1"/>
</dbReference>
<dbReference type="PROSITE" id="PS00627">
    <property type="entry name" value="GHMP_KINASES_ATP"/>
    <property type="match status" value="1"/>
</dbReference>
<comment type="function">
    <text evidence="1">Catalyzes the ATP-dependent phosphorylation of L-homoserine to L-homoserine phosphate.</text>
</comment>
<comment type="catalytic activity">
    <reaction evidence="1">
        <text>L-homoserine + ATP = O-phospho-L-homoserine + ADP + H(+)</text>
        <dbReference type="Rhea" id="RHEA:13985"/>
        <dbReference type="ChEBI" id="CHEBI:15378"/>
        <dbReference type="ChEBI" id="CHEBI:30616"/>
        <dbReference type="ChEBI" id="CHEBI:57476"/>
        <dbReference type="ChEBI" id="CHEBI:57590"/>
        <dbReference type="ChEBI" id="CHEBI:456216"/>
        <dbReference type="EC" id="2.7.1.39"/>
    </reaction>
</comment>
<comment type="pathway">
    <text evidence="1">Amino-acid biosynthesis; L-threonine biosynthesis; L-threonine from L-aspartate: step 4/5.</text>
</comment>
<comment type="subcellular location">
    <subcellularLocation>
        <location evidence="1">Cytoplasm</location>
    </subcellularLocation>
</comment>
<comment type="similarity">
    <text evidence="1">Belongs to the GHMP kinase family. Homoserine kinase subfamily.</text>
</comment>
<protein>
    <recommendedName>
        <fullName evidence="1">Homoserine kinase</fullName>
        <shortName evidence="1">HK</shortName>
        <shortName evidence="1">HSK</shortName>
        <ecNumber evidence="1">2.7.1.39</ecNumber>
    </recommendedName>
</protein>
<name>KHSE_SALAR</name>
<sequence>MVKVYAPASSANMSVGFDVLGAAVTPVDGALLGDVVSVEAADSFSLNNLGRFADKLPPEPRENIVYQCWERFCHALGKTIPVAMTLEKNMPIGSGLGSSACSVVAALVAMNEHCGKPLNDTRLLAMMGELEGRISGSVHYDNVAPCFLGGMQLMIEENGIISQQIPGFDEWLWVLAYPGIKVSTAEARAILPAQYRRQDCIAHGRHLAGFIHACYSRQPQLAAALMKDVIAEPYRARLLPGFSQARQAVAEIGALASGISGSGPTLFALCDKPETAQRVADWLSKHYLQNQEGFVHICRLDTAGARVLG</sequence>